<evidence type="ECO:0000250" key="1"/>
<evidence type="ECO:0000255" key="2">
    <source>
        <dbReference type="PROSITE-ProRule" id="PRU00173"/>
    </source>
</evidence>
<reference key="1">
    <citation type="journal article" date="1990" name="J. Bacteriol.">
        <title>Disruption of a rhodaneselike gene results in cysteine auxotrophy in Saccharopolyspora erythraea.</title>
        <authorList>
            <person name="Donadio S."/>
            <person name="Shafiee A."/>
            <person name="Hutchinson C.R."/>
        </authorList>
    </citation>
    <scope>NUCLEOTIDE SEQUENCE [GENOMIC DNA]</scope>
    <scope>PROTEIN SEQUENCE OF 3-16</scope>
    <source>
        <strain>WHM22</strain>
    </source>
</reference>
<accession>P16385</accession>
<comment type="function">
    <text>May be a sulfotransferase involved in the formation of thiosulfate.</text>
</comment>
<comment type="catalytic activity">
    <reaction>
        <text>thiosulfate + hydrogen cyanide = thiocyanate + sulfite + 2 H(+)</text>
        <dbReference type="Rhea" id="RHEA:16881"/>
        <dbReference type="ChEBI" id="CHEBI:15378"/>
        <dbReference type="ChEBI" id="CHEBI:17359"/>
        <dbReference type="ChEBI" id="CHEBI:18022"/>
        <dbReference type="ChEBI" id="CHEBI:18407"/>
        <dbReference type="ChEBI" id="CHEBI:33542"/>
        <dbReference type="EC" id="2.8.1.1"/>
    </reaction>
</comment>
<comment type="domain">
    <text>The structure consists of 2 domains of very similar conformation, suggesting a common evolutionary origin. However, the sequences of the 2 domains are very different.</text>
</comment>
<comment type="domain">
    <text evidence="1">Contains two rhodanese domains with different primary structures but with near identical secondary structure conformations suggesting a common evolutionary origin. Only the C-terminal rhodanese domain contains the catalytic cysteine residue (By similarity).</text>
</comment>
<keyword id="KW-0903">Direct protein sequencing</keyword>
<keyword id="KW-0677">Repeat</keyword>
<keyword id="KW-0808">Transferase</keyword>
<proteinExistence type="evidence at protein level"/>
<sequence length="281" mass="31425">MSREEVLVSTDWAEQNLNTDGVVFAEVDEDTTAYDGGHIPGAIKLDWKNELQDHVRRDFVNREGFEKLLSAKGIGNDDTVILYGGNNNWFAAYAYWYFKLYGHSDVKLLDGGRKKWELDGRELTKEEPNRAATAYKAQEPDASIRAFRDEVVDAIGNKNLVDVRSPDEFAGKLLAPAHLPQESAQRAGHIPSAINVPWSKAANEDGTFKSDEELKQVYGEAGLDTDKDTIAYCRIGERSSHTWFVLRELLGHTNVKNYDGSWTEYGSLVGVPIENPQEQGA</sequence>
<feature type="chain" id="PRO_0000139420" description="Putative thiosulfate sulfurtransferase">
    <location>
        <begin position="1"/>
        <end position="281"/>
    </location>
</feature>
<feature type="domain" description="Rhodanese 1" evidence="2">
    <location>
        <begin position="18"/>
        <end position="125"/>
    </location>
</feature>
<feature type="domain" description="Rhodanese 2" evidence="2">
    <location>
        <begin position="154"/>
        <end position="274"/>
    </location>
</feature>
<feature type="active site" description="Cysteine persulfide intermediate" evidence="2">
    <location>
        <position position="233"/>
    </location>
</feature>
<feature type="binding site" evidence="1">
    <location>
        <position position="238"/>
    </location>
    <ligand>
        <name>substrate</name>
    </ligand>
</feature>
<gene>
    <name type="primary">cysA</name>
</gene>
<organism>
    <name type="scientific">Saccharopolyspora erythraea</name>
    <name type="common">Streptomyces erythraeus</name>
    <dbReference type="NCBI Taxonomy" id="1836"/>
    <lineage>
        <taxon>Bacteria</taxon>
        <taxon>Bacillati</taxon>
        <taxon>Actinomycetota</taxon>
        <taxon>Actinomycetes</taxon>
        <taxon>Pseudonocardiales</taxon>
        <taxon>Pseudonocardiaceae</taxon>
        <taxon>Saccharopolyspora</taxon>
    </lineage>
</organism>
<name>THTR_SACER</name>
<protein>
    <recommendedName>
        <fullName>Putative thiosulfate sulfurtransferase</fullName>
        <ecNumber>2.8.1.1</ecNumber>
    </recommendedName>
    <alternativeName>
        <fullName>Rhodanese-like protein</fullName>
    </alternativeName>
</protein>
<dbReference type="EC" id="2.8.1.1"/>
<dbReference type="EMBL" id="M29612">
    <property type="protein sequence ID" value="AAA88535.1"/>
    <property type="molecule type" value="Genomic_DNA"/>
</dbReference>
<dbReference type="RefSeq" id="WP_009949184.1">
    <property type="nucleotide sequence ID" value="NZ_JABNNH010000002.1"/>
</dbReference>
<dbReference type="SMR" id="P16385"/>
<dbReference type="OMA" id="NNNWFAS"/>
<dbReference type="GO" id="GO:0004792">
    <property type="term" value="F:thiosulfate-cyanide sulfurtransferase activity"/>
    <property type="evidence" value="ECO:0007669"/>
    <property type="project" value="UniProtKB-EC"/>
</dbReference>
<dbReference type="CDD" id="cd01448">
    <property type="entry name" value="TST_Repeat_1"/>
    <property type="match status" value="1"/>
</dbReference>
<dbReference type="CDD" id="cd01449">
    <property type="entry name" value="TST_Repeat_2"/>
    <property type="match status" value="1"/>
</dbReference>
<dbReference type="FunFam" id="3.40.250.10:FF:000024">
    <property type="entry name" value="Sulfurtransferase"/>
    <property type="match status" value="1"/>
</dbReference>
<dbReference type="Gene3D" id="3.40.250.10">
    <property type="entry name" value="Rhodanese-like domain"/>
    <property type="match status" value="2"/>
</dbReference>
<dbReference type="InterPro" id="IPR001763">
    <property type="entry name" value="Rhodanese-like_dom"/>
</dbReference>
<dbReference type="InterPro" id="IPR036873">
    <property type="entry name" value="Rhodanese-like_dom_sf"/>
</dbReference>
<dbReference type="InterPro" id="IPR051126">
    <property type="entry name" value="Thiosulfate_sulfurtransferase"/>
</dbReference>
<dbReference type="InterPro" id="IPR001307">
    <property type="entry name" value="Thiosulphate_STrfase_CS"/>
</dbReference>
<dbReference type="PANTHER" id="PTHR43855">
    <property type="entry name" value="THIOSULFATE SULFURTRANSFERASE"/>
    <property type="match status" value="1"/>
</dbReference>
<dbReference type="PANTHER" id="PTHR43855:SF1">
    <property type="entry name" value="THIOSULFATE SULFURTRANSFERASE"/>
    <property type="match status" value="1"/>
</dbReference>
<dbReference type="Pfam" id="PF00581">
    <property type="entry name" value="Rhodanese"/>
    <property type="match status" value="2"/>
</dbReference>
<dbReference type="SMART" id="SM00450">
    <property type="entry name" value="RHOD"/>
    <property type="match status" value="2"/>
</dbReference>
<dbReference type="SUPFAM" id="SSF52821">
    <property type="entry name" value="Rhodanese/Cell cycle control phosphatase"/>
    <property type="match status" value="2"/>
</dbReference>
<dbReference type="PROSITE" id="PS00380">
    <property type="entry name" value="RHODANESE_1"/>
    <property type="match status" value="1"/>
</dbReference>
<dbReference type="PROSITE" id="PS00683">
    <property type="entry name" value="RHODANESE_2"/>
    <property type="match status" value="1"/>
</dbReference>
<dbReference type="PROSITE" id="PS50206">
    <property type="entry name" value="RHODANESE_3"/>
    <property type="match status" value="2"/>
</dbReference>